<reference key="1">
    <citation type="journal article" date="2001" name="Lancet">
        <title>Whole genome sequencing of meticillin-resistant Staphylococcus aureus.</title>
        <authorList>
            <person name="Kuroda M."/>
            <person name="Ohta T."/>
            <person name="Uchiyama I."/>
            <person name="Baba T."/>
            <person name="Yuzawa H."/>
            <person name="Kobayashi I."/>
            <person name="Cui L."/>
            <person name="Oguchi A."/>
            <person name="Aoki K."/>
            <person name="Nagai Y."/>
            <person name="Lian J.-Q."/>
            <person name="Ito T."/>
            <person name="Kanamori M."/>
            <person name="Matsumaru H."/>
            <person name="Maruyama A."/>
            <person name="Murakami H."/>
            <person name="Hosoyama A."/>
            <person name="Mizutani-Ui Y."/>
            <person name="Takahashi N.K."/>
            <person name="Sawano T."/>
            <person name="Inoue R."/>
            <person name="Kaito C."/>
            <person name="Sekimizu K."/>
            <person name="Hirakawa H."/>
            <person name="Kuhara S."/>
            <person name="Goto S."/>
            <person name="Yabuzaki J."/>
            <person name="Kanehisa M."/>
            <person name="Yamashita A."/>
            <person name="Oshima K."/>
            <person name="Furuya K."/>
            <person name="Yoshino C."/>
            <person name="Shiba T."/>
            <person name="Hattori M."/>
            <person name="Ogasawara N."/>
            <person name="Hayashi H."/>
            <person name="Hiramatsu K."/>
        </authorList>
    </citation>
    <scope>NUCLEOTIDE SEQUENCE [LARGE SCALE GENOMIC DNA]</scope>
    <source>
        <strain>N315</strain>
    </source>
</reference>
<protein>
    <recommendedName>
        <fullName>Chemotaxis inhibitory protein</fullName>
    </recommendedName>
    <alternativeName>
        <fullName>CHIPS</fullName>
    </alternativeName>
</protein>
<feature type="signal peptide" evidence="1">
    <location>
        <begin position="1"/>
        <end position="28"/>
    </location>
</feature>
<feature type="chain" id="PRO_0000319606" description="Chemotaxis inhibitory protein">
    <location>
        <begin position="29"/>
        <end position="149"/>
    </location>
</feature>
<feature type="region of interest" description="FPR-blocking activity" evidence="1">
    <location>
        <begin position="29"/>
        <end position="34"/>
    </location>
</feature>
<feature type="region of interest" description="C5aR-blocking activity" evidence="1">
    <location>
        <begin position="59"/>
        <end position="149"/>
    </location>
</feature>
<evidence type="ECO:0000250" key="1"/>
<evidence type="ECO:0000305" key="2"/>
<accession>Q99SU8</accession>
<keyword id="KW-0964">Secreted</keyword>
<keyword id="KW-0732">Signal</keyword>
<keyword id="KW-0843">Virulence</keyword>
<comment type="function">
    <text evidence="1">Involved in countering the first line of host defense mechanisms. Specifically inhibits the response of human neutrophils and monocytes to complement anaphylatoxin C5a and formylated peptides, like N-formyl-methionyl-leucyl-phenylalanine (fMLP). Acts by binding directly to the C5a receptor (C5aR) and formylated peptide receptor (FPR), thereby blocking the C5a- and fMLP-induced calcium responses. Prevents phagocytosis of the bacterium (By similarity).</text>
</comment>
<comment type="subcellular location">
    <subcellularLocation>
        <location evidence="1">Secreted</location>
    </subcellularLocation>
</comment>
<comment type="similarity">
    <text evidence="2">Belongs to the CHIPS/FLIPr family.</text>
</comment>
<dbReference type="EMBL" id="BA000018">
    <property type="protein sequence ID" value="BAB43029.1"/>
    <property type="molecule type" value="Genomic_DNA"/>
</dbReference>
<dbReference type="PIR" id="E89983">
    <property type="entry name" value="E89983"/>
</dbReference>
<dbReference type="RefSeq" id="WP_000727645.1">
    <property type="nucleotide sequence ID" value="NC_002745.2"/>
</dbReference>
<dbReference type="BMRB" id="Q99SU8"/>
<dbReference type="SMR" id="Q99SU8"/>
<dbReference type="EnsemblBacteria" id="BAB43029">
    <property type="protein sequence ID" value="BAB43029"/>
    <property type="gene ID" value="BAB43029"/>
</dbReference>
<dbReference type="KEGG" id="sau:SA1755"/>
<dbReference type="KEGG" id="vg:1260561"/>
<dbReference type="HOGENOM" id="CLU_1748521_0_0_9"/>
<dbReference type="PRO" id="PR:Q99SU8"/>
<dbReference type="GO" id="GO:0005576">
    <property type="term" value="C:extracellular region"/>
    <property type="evidence" value="ECO:0007669"/>
    <property type="project" value="UniProtKB-SubCell"/>
</dbReference>
<dbReference type="Gene3D" id="3.10.20.390">
    <property type="entry name" value="Chemotaxis-inhibiting protein CHIPS"/>
    <property type="match status" value="1"/>
</dbReference>
<dbReference type="InterPro" id="IPR020986">
    <property type="entry name" value="CHIPS"/>
</dbReference>
<dbReference type="InterPro" id="IPR038529">
    <property type="entry name" value="FLIPR/CHIP_sf"/>
</dbReference>
<dbReference type="InterPro" id="IPR023253">
    <property type="entry name" value="FLIPR/CHIPS"/>
</dbReference>
<dbReference type="NCBIfam" id="NF009591">
    <property type="entry name" value="PRK13032.1"/>
    <property type="match status" value="1"/>
</dbReference>
<dbReference type="Pfam" id="PF11434">
    <property type="entry name" value="CHIPS"/>
    <property type="match status" value="1"/>
</dbReference>
<dbReference type="PRINTS" id="PR02036">
    <property type="entry name" value="CHEMOTAXISIP"/>
</dbReference>
<dbReference type="PRINTS" id="PR02035">
    <property type="entry name" value="FLIPRCHIPS"/>
</dbReference>
<name>CHIPS_STAAN</name>
<gene>
    <name type="primary">chp</name>
    <name type="ordered locus">SA1755</name>
</gene>
<proteinExistence type="inferred from homology"/>
<organism>
    <name type="scientific">Staphylococcus aureus (strain N315)</name>
    <dbReference type="NCBI Taxonomy" id="158879"/>
    <lineage>
        <taxon>Bacteria</taxon>
        <taxon>Bacillati</taxon>
        <taxon>Bacillota</taxon>
        <taxon>Bacilli</taxon>
        <taxon>Bacillales</taxon>
        <taxon>Staphylococcaceae</taxon>
        <taxon>Staphylococcus</taxon>
    </lineage>
</organism>
<sequence length="149" mass="17073">MKKKLATTVLALSFLTAGISTHHHSAKAFTFEPFPTNEEIESNKKMLEKEKAYKESFKNSGLPTTLGKLDERLRNYLEKGTKNTAQFEKMVILTENKGYYTVYLNTPLAEDRKNVELLGKMYKTYFFKKGESKSSYVINGPGKTNEYAY</sequence>